<accession>B7IDR9</accession>
<name>UPP_THEAB</name>
<dbReference type="EC" id="2.4.2.9" evidence="1"/>
<dbReference type="EMBL" id="CP001185">
    <property type="protein sequence ID" value="ACJ76146.1"/>
    <property type="molecule type" value="Genomic_DNA"/>
</dbReference>
<dbReference type="RefSeq" id="WP_012580367.1">
    <property type="nucleotide sequence ID" value="NC_011653.1"/>
</dbReference>
<dbReference type="SMR" id="B7IDR9"/>
<dbReference type="STRING" id="484019.THA_1710"/>
<dbReference type="KEGG" id="taf:THA_1710"/>
<dbReference type="eggNOG" id="COG0035">
    <property type="taxonomic scope" value="Bacteria"/>
</dbReference>
<dbReference type="HOGENOM" id="CLU_067096_2_2_0"/>
<dbReference type="OrthoDB" id="9781675at2"/>
<dbReference type="UniPathway" id="UPA00574">
    <property type="reaction ID" value="UER00636"/>
</dbReference>
<dbReference type="Proteomes" id="UP000002453">
    <property type="component" value="Chromosome"/>
</dbReference>
<dbReference type="GO" id="GO:0005525">
    <property type="term" value="F:GTP binding"/>
    <property type="evidence" value="ECO:0007669"/>
    <property type="project" value="UniProtKB-KW"/>
</dbReference>
<dbReference type="GO" id="GO:0000287">
    <property type="term" value="F:magnesium ion binding"/>
    <property type="evidence" value="ECO:0007669"/>
    <property type="project" value="UniProtKB-UniRule"/>
</dbReference>
<dbReference type="GO" id="GO:0004845">
    <property type="term" value="F:uracil phosphoribosyltransferase activity"/>
    <property type="evidence" value="ECO:0007669"/>
    <property type="project" value="UniProtKB-UniRule"/>
</dbReference>
<dbReference type="GO" id="GO:0044206">
    <property type="term" value="P:UMP salvage"/>
    <property type="evidence" value="ECO:0007669"/>
    <property type="project" value="UniProtKB-UniRule"/>
</dbReference>
<dbReference type="GO" id="GO:0006223">
    <property type="term" value="P:uracil salvage"/>
    <property type="evidence" value="ECO:0007669"/>
    <property type="project" value="InterPro"/>
</dbReference>
<dbReference type="CDD" id="cd06223">
    <property type="entry name" value="PRTases_typeI"/>
    <property type="match status" value="1"/>
</dbReference>
<dbReference type="FunFam" id="3.40.50.2020:FF:000003">
    <property type="entry name" value="Uracil phosphoribosyltransferase"/>
    <property type="match status" value="1"/>
</dbReference>
<dbReference type="Gene3D" id="3.40.50.2020">
    <property type="match status" value="1"/>
</dbReference>
<dbReference type="HAMAP" id="MF_01218_B">
    <property type="entry name" value="Upp_B"/>
    <property type="match status" value="1"/>
</dbReference>
<dbReference type="InterPro" id="IPR000836">
    <property type="entry name" value="PRibTrfase_dom"/>
</dbReference>
<dbReference type="InterPro" id="IPR029057">
    <property type="entry name" value="PRTase-like"/>
</dbReference>
<dbReference type="InterPro" id="IPR034332">
    <property type="entry name" value="Upp_B"/>
</dbReference>
<dbReference type="InterPro" id="IPR050054">
    <property type="entry name" value="UPRTase/APRTase"/>
</dbReference>
<dbReference type="InterPro" id="IPR005765">
    <property type="entry name" value="Ura_phspho_trans"/>
</dbReference>
<dbReference type="NCBIfam" id="NF001097">
    <property type="entry name" value="PRK00129.1"/>
    <property type="match status" value="1"/>
</dbReference>
<dbReference type="NCBIfam" id="TIGR01091">
    <property type="entry name" value="upp"/>
    <property type="match status" value="1"/>
</dbReference>
<dbReference type="PANTHER" id="PTHR32315">
    <property type="entry name" value="ADENINE PHOSPHORIBOSYLTRANSFERASE"/>
    <property type="match status" value="1"/>
</dbReference>
<dbReference type="PANTHER" id="PTHR32315:SF4">
    <property type="entry name" value="URACIL PHOSPHORIBOSYLTRANSFERASE, CHLOROPLASTIC"/>
    <property type="match status" value="1"/>
</dbReference>
<dbReference type="Pfam" id="PF14681">
    <property type="entry name" value="UPRTase"/>
    <property type="match status" value="1"/>
</dbReference>
<dbReference type="SUPFAM" id="SSF53271">
    <property type="entry name" value="PRTase-like"/>
    <property type="match status" value="1"/>
</dbReference>
<gene>
    <name evidence="1" type="primary">upp</name>
    <name type="ordered locus">THA_1710</name>
</gene>
<reference key="1">
    <citation type="journal article" date="2009" name="J. Bacteriol.">
        <title>The genome of Thermosipho africanus TCF52B: lateral genetic connections to the Firmicutes and Archaea.</title>
        <authorList>
            <person name="Nesboe C.L."/>
            <person name="Bapteste E."/>
            <person name="Curtis B."/>
            <person name="Dahle H."/>
            <person name="Lopez P."/>
            <person name="Macleod D."/>
            <person name="Dlutek M."/>
            <person name="Bowman S."/>
            <person name="Zhaxybayeva O."/>
            <person name="Birkeland N.-K."/>
            <person name="Doolittle W.F."/>
        </authorList>
    </citation>
    <scope>NUCLEOTIDE SEQUENCE [LARGE SCALE GENOMIC DNA]</scope>
    <source>
        <strain>TCF52B</strain>
    </source>
</reference>
<feature type="chain" id="PRO_1000139170" description="Uracil phosphoribosyltransferase">
    <location>
        <begin position="1"/>
        <end position="208"/>
    </location>
</feature>
<feature type="binding site" evidence="1">
    <location>
        <position position="78"/>
    </location>
    <ligand>
        <name>5-phospho-alpha-D-ribose 1-diphosphate</name>
        <dbReference type="ChEBI" id="CHEBI:58017"/>
    </ligand>
</feature>
<feature type="binding site" evidence="1">
    <location>
        <position position="103"/>
    </location>
    <ligand>
        <name>5-phospho-alpha-D-ribose 1-diphosphate</name>
        <dbReference type="ChEBI" id="CHEBI:58017"/>
    </ligand>
</feature>
<feature type="binding site" evidence="1">
    <location>
        <begin position="130"/>
        <end position="138"/>
    </location>
    <ligand>
        <name>5-phospho-alpha-D-ribose 1-diphosphate</name>
        <dbReference type="ChEBI" id="CHEBI:58017"/>
    </ligand>
</feature>
<feature type="binding site" evidence="1">
    <location>
        <position position="193"/>
    </location>
    <ligand>
        <name>uracil</name>
        <dbReference type="ChEBI" id="CHEBI:17568"/>
    </ligand>
</feature>
<feature type="binding site" evidence="1">
    <location>
        <begin position="198"/>
        <end position="200"/>
    </location>
    <ligand>
        <name>uracil</name>
        <dbReference type="ChEBI" id="CHEBI:17568"/>
    </ligand>
</feature>
<feature type="binding site" evidence="1">
    <location>
        <position position="199"/>
    </location>
    <ligand>
        <name>5-phospho-alpha-D-ribose 1-diphosphate</name>
        <dbReference type="ChEBI" id="CHEBI:58017"/>
    </ligand>
</feature>
<sequence>MKINVVDHPLIKHKLTIMRKTDTGPKEFRELLKEITLLIAYEATRHLEIHETEIETPLEKTKGYFIDDKDVVIVPILRAGLGMSDGILQLLPNASVGHIGIYREPHTLEAVEYYAKLPKINENSFVFVLDPMLATGVSSVKALDIVKEHGAKNVILVTLIASPEGTRVVNDKHPDVIIYTASLDRELNSKGYILPGLGDAGDRLFRTK</sequence>
<protein>
    <recommendedName>
        <fullName evidence="1">Uracil phosphoribosyltransferase</fullName>
        <ecNumber evidence="1">2.4.2.9</ecNumber>
    </recommendedName>
    <alternativeName>
        <fullName evidence="1">UMP pyrophosphorylase</fullName>
    </alternativeName>
    <alternativeName>
        <fullName evidence="1">UPRTase</fullName>
    </alternativeName>
</protein>
<proteinExistence type="inferred from homology"/>
<evidence type="ECO:0000255" key="1">
    <source>
        <dbReference type="HAMAP-Rule" id="MF_01218"/>
    </source>
</evidence>
<keyword id="KW-0021">Allosteric enzyme</keyword>
<keyword id="KW-0328">Glycosyltransferase</keyword>
<keyword id="KW-0342">GTP-binding</keyword>
<keyword id="KW-0460">Magnesium</keyword>
<keyword id="KW-0547">Nucleotide-binding</keyword>
<keyword id="KW-1185">Reference proteome</keyword>
<keyword id="KW-0808">Transferase</keyword>
<comment type="function">
    <text evidence="1">Catalyzes the conversion of uracil and 5-phospho-alpha-D-ribose 1-diphosphate (PRPP) to UMP and diphosphate.</text>
</comment>
<comment type="catalytic activity">
    <reaction evidence="1">
        <text>UMP + diphosphate = 5-phospho-alpha-D-ribose 1-diphosphate + uracil</text>
        <dbReference type="Rhea" id="RHEA:13017"/>
        <dbReference type="ChEBI" id="CHEBI:17568"/>
        <dbReference type="ChEBI" id="CHEBI:33019"/>
        <dbReference type="ChEBI" id="CHEBI:57865"/>
        <dbReference type="ChEBI" id="CHEBI:58017"/>
        <dbReference type="EC" id="2.4.2.9"/>
    </reaction>
</comment>
<comment type="cofactor">
    <cofactor evidence="1">
        <name>Mg(2+)</name>
        <dbReference type="ChEBI" id="CHEBI:18420"/>
    </cofactor>
    <text evidence="1">Binds 1 Mg(2+) ion per subunit. The magnesium is bound as Mg-PRPP.</text>
</comment>
<comment type="activity regulation">
    <text evidence="1">Allosterically activated by GTP.</text>
</comment>
<comment type="pathway">
    <text evidence="1">Pyrimidine metabolism; UMP biosynthesis via salvage pathway; UMP from uracil: step 1/1.</text>
</comment>
<comment type="similarity">
    <text evidence="1">Belongs to the UPRTase family.</text>
</comment>
<organism>
    <name type="scientific">Thermosipho africanus (strain TCF52B)</name>
    <dbReference type="NCBI Taxonomy" id="484019"/>
    <lineage>
        <taxon>Bacteria</taxon>
        <taxon>Thermotogati</taxon>
        <taxon>Thermotogota</taxon>
        <taxon>Thermotogae</taxon>
        <taxon>Thermotogales</taxon>
        <taxon>Fervidobacteriaceae</taxon>
        <taxon>Thermosipho</taxon>
    </lineage>
</organism>